<dbReference type="EMBL" id="AF243044">
    <property type="protein sequence ID" value="AAF62100.1"/>
    <property type="molecule type" value="mRNA"/>
</dbReference>
<dbReference type="EMBL" id="AK314905">
    <property type="status" value="NOT_ANNOTATED_CDS"/>
    <property type="molecule type" value="mRNA"/>
</dbReference>
<dbReference type="EMBL" id="CR457204">
    <property type="protein sequence ID" value="CAG33485.1"/>
    <property type="molecule type" value="mRNA"/>
</dbReference>
<dbReference type="EMBL" id="AC008481">
    <property type="status" value="NOT_ANNOTATED_CDS"/>
    <property type="molecule type" value="Genomic_DNA"/>
</dbReference>
<dbReference type="EMBL" id="BC000193">
    <property type="protein sequence ID" value="AAH00193.1"/>
    <property type="molecule type" value="mRNA"/>
</dbReference>
<dbReference type="EMBL" id="BC005119">
    <property type="protein sequence ID" value="AAH05119.1"/>
    <property type="molecule type" value="mRNA"/>
</dbReference>
<dbReference type="EMBL" id="BC008279">
    <property type="protein sequence ID" value="AAH08279.1"/>
    <property type="molecule type" value="mRNA"/>
</dbReference>
<dbReference type="CCDS" id="CCDS12262.1">
    <molecule id="Q9BQ95-1"/>
</dbReference>
<dbReference type="CCDS" id="CCDS45979.1">
    <molecule id="Q9BQ95-3"/>
</dbReference>
<dbReference type="CCDS" id="CCDS45980.1">
    <molecule id="Q9BQ95-2"/>
</dbReference>
<dbReference type="CCDS" id="CCDS59353.1">
    <molecule id="Q9BQ95-4"/>
</dbReference>
<dbReference type="RefSeq" id="NP_001135936.1">
    <molecule id="Q9BQ95-2"/>
    <property type="nucleotide sequence ID" value="NM_001142464.3"/>
</dbReference>
<dbReference type="RefSeq" id="NP_001135937.1">
    <molecule id="Q9BQ95-3"/>
    <property type="nucleotide sequence ID" value="NM_001142465.3"/>
</dbReference>
<dbReference type="RefSeq" id="NP_001230133.1">
    <molecule id="Q9BQ95-4"/>
    <property type="nucleotide sequence ID" value="NM_001243204.2"/>
</dbReference>
<dbReference type="RefSeq" id="NP_057665.2">
    <molecule id="Q9BQ95-1"/>
    <property type="nucleotide sequence ID" value="NM_016581.4"/>
</dbReference>
<dbReference type="EMDB" id="EMD-17659"/>
<dbReference type="SASBDB" id="Q9BQ95"/>
<dbReference type="SMR" id="Q9BQ95"/>
<dbReference type="BioGRID" id="119446">
    <property type="interactions" value="269"/>
</dbReference>
<dbReference type="ComplexPortal" id="CPX-6322">
    <property type="entry name" value="Mitochondrial complex I intermediate assembly (MCIA) complex"/>
</dbReference>
<dbReference type="CORUM" id="Q9BQ95"/>
<dbReference type="FunCoup" id="Q9BQ95">
    <property type="interactions" value="3005"/>
</dbReference>
<dbReference type="IntAct" id="Q9BQ95">
    <property type="interactions" value="143"/>
</dbReference>
<dbReference type="MINT" id="Q9BQ95"/>
<dbReference type="STRING" id="9606.ENSP00000270517"/>
<dbReference type="iPTMnet" id="Q9BQ95"/>
<dbReference type="PhosphoSitePlus" id="Q9BQ95"/>
<dbReference type="SwissPalm" id="Q9BQ95"/>
<dbReference type="BioMuta" id="ECSIT"/>
<dbReference type="DMDM" id="74752234"/>
<dbReference type="jPOST" id="Q9BQ95"/>
<dbReference type="MassIVE" id="Q9BQ95"/>
<dbReference type="PaxDb" id="9606-ENSP00000270517"/>
<dbReference type="PeptideAtlas" id="Q9BQ95"/>
<dbReference type="ProteomicsDB" id="19054"/>
<dbReference type="ProteomicsDB" id="78645">
    <molecule id="Q9BQ95-1"/>
</dbReference>
<dbReference type="ProteomicsDB" id="78646">
    <molecule id="Q9BQ95-2"/>
</dbReference>
<dbReference type="Pumba" id="Q9BQ95"/>
<dbReference type="TopDownProteomics" id="Q9BQ95-1">
    <molecule id="Q9BQ95-1"/>
</dbReference>
<dbReference type="Antibodypedia" id="13189">
    <property type="antibodies" value="219 antibodies from 31 providers"/>
</dbReference>
<dbReference type="DNASU" id="51295"/>
<dbReference type="Ensembl" id="ENST00000252440.11">
    <molecule id="Q9BQ95-2"/>
    <property type="protein sequence ID" value="ENSP00000252440.6"/>
    <property type="gene ID" value="ENSG00000130159.15"/>
</dbReference>
<dbReference type="Ensembl" id="ENST00000270517.12">
    <molecule id="Q9BQ95-1"/>
    <property type="protein sequence ID" value="ENSP00000270517.6"/>
    <property type="gene ID" value="ENSG00000130159.15"/>
</dbReference>
<dbReference type="Ensembl" id="ENST00000417981.6">
    <molecule id="Q9BQ95-3"/>
    <property type="protein sequence ID" value="ENSP00000412712.1"/>
    <property type="gene ID" value="ENSG00000130159.15"/>
</dbReference>
<dbReference type="Ensembl" id="ENST00000591104.5">
    <molecule id="Q9BQ95-4"/>
    <property type="protein sequence ID" value="ENSP00000466559.1"/>
    <property type="gene ID" value="ENSG00000130159.15"/>
</dbReference>
<dbReference type="Ensembl" id="ENST00000688351.1">
    <molecule id="Q9BQ95-1"/>
    <property type="protein sequence ID" value="ENSP00000508502.1"/>
    <property type="gene ID" value="ENSG00000130159.15"/>
</dbReference>
<dbReference type="Ensembl" id="ENST00000690346.1">
    <molecule id="Q9BQ95-1"/>
    <property type="protein sequence ID" value="ENSP00000510792.1"/>
    <property type="gene ID" value="ENSG00000130159.15"/>
</dbReference>
<dbReference type="GeneID" id="51295"/>
<dbReference type="KEGG" id="hsa:51295"/>
<dbReference type="MANE-Select" id="ENST00000270517.12">
    <property type="protein sequence ID" value="ENSP00000270517.6"/>
    <property type="RefSeq nucleotide sequence ID" value="NM_016581.5"/>
    <property type="RefSeq protein sequence ID" value="NP_057665.2"/>
</dbReference>
<dbReference type="UCSC" id="uc002msb.4">
    <molecule id="Q9BQ95-1"/>
    <property type="organism name" value="human"/>
</dbReference>
<dbReference type="AGR" id="HGNC:29548"/>
<dbReference type="CTD" id="51295"/>
<dbReference type="DisGeNET" id="51295"/>
<dbReference type="GeneCards" id="ECSIT"/>
<dbReference type="HGNC" id="HGNC:29548">
    <property type="gene designation" value="ECSIT"/>
</dbReference>
<dbReference type="HPA" id="ENSG00000130159">
    <property type="expression patterns" value="Low tissue specificity"/>
</dbReference>
<dbReference type="MalaCards" id="ECSIT"/>
<dbReference type="MIM" id="608388">
    <property type="type" value="gene"/>
</dbReference>
<dbReference type="neXtProt" id="NX_Q9BQ95"/>
<dbReference type="OpenTargets" id="ENSG00000130159"/>
<dbReference type="PharmGKB" id="PA147358104"/>
<dbReference type="VEuPathDB" id="HostDB:ENSG00000130159"/>
<dbReference type="eggNOG" id="KOG3941">
    <property type="taxonomic scope" value="Eukaryota"/>
</dbReference>
<dbReference type="GeneTree" id="ENSGT00390000005147"/>
<dbReference type="HOGENOM" id="CLU_046917_0_0_1"/>
<dbReference type="InParanoid" id="Q9BQ95"/>
<dbReference type="OMA" id="GPFHIWL"/>
<dbReference type="OrthoDB" id="10064298at2759"/>
<dbReference type="PAN-GO" id="Q9BQ95">
    <property type="GO annotations" value="1 GO annotation based on evolutionary models"/>
</dbReference>
<dbReference type="PhylomeDB" id="Q9BQ95"/>
<dbReference type="TreeFam" id="TF314943"/>
<dbReference type="PathwayCommons" id="Q9BQ95"/>
<dbReference type="Reactome" id="R-HSA-166058">
    <property type="pathway name" value="MyD88:MAL(TIRAP) cascade initiated on plasma membrane"/>
</dbReference>
<dbReference type="Reactome" id="R-HSA-6799198">
    <property type="pathway name" value="Complex I biogenesis"/>
</dbReference>
<dbReference type="Reactome" id="R-HSA-975138">
    <property type="pathway name" value="TRAF6 mediated induction of NFkB and MAP kinases upon TLR7/8 or 9 activation"/>
</dbReference>
<dbReference type="Reactome" id="R-HSA-975871">
    <property type="pathway name" value="MyD88 cascade initiated on plasma membrane"/>
</dbReference>
<dbReference type="SignaLink" id="Q9BQ95"/>
<dbReference type="SIGNOR" id="Q9BQ95"/>
<dbReference type="BioGRID-ORCS" id="51295">
    <property type="hits" value="95 hits in 1180 CRISPR screens"/>
</dbReference>
<dbReference type="ChiTaRS" id="ECSIT">
    <property type="organism name" value="human"/>
</dbReference>
<dbReference type="GenomeRNAi" id="51295"/>
<dbReference type="Pharos" id="Q9BQ95">
    <property type="development level" value="Tbio"/>
</dbReference>
<dbReference type="PRO" id="PR:Q9BQ95"/>
<dbReference type="Proteomes" id="UP000005640">
    <property type="component" value="Chromosome 19"/>
</dbReference>
<dbReference type="RNAct" id="Q9BQ95">
    <property type="molecule type" value="protein"/>
</dbReference>
<dbReference type="Bgee" id="ENSG00000130159">
    <property type="expression patterns" value="Expressed in apex of heart and 193 other cell types or tissues"/>
</dbReference>
<dbReference type="ExpressionAtlas" id="Q9BQ95">
    <property type="expression patterns" value="baseline and differential"/>
</dbReference>
<dbReference type="GO" id="GO:0005737">
    <property type="term" value="C:cytoplasm"/>
    <property type="evidence" value="ECO:0000314"/>
    <property type="project" value="UniProtKB"/>
</dbReference>
<dbReference type="GO" id="GO:0005829">
    <property type="term" value="C:cytosol"/>
    <property type="evidence" value="ECO:0000314"/>
    <property type="project" value="HPA"/>
</dbReference>
<dbReference type="GO" id="GO:0005743">
    <property type="term" value="C:mitochondrial inner membrane"/>
    <property type="evidence" value="ECO:0000304"/>
    <property type="project" value="Reactome"/>
</dbReference>
<dbReference type="GO" id="GO:0005739">
    <property type="term" value="C:mitochondrion"/>
    <property type="evidence" value="ECO:0000314"/>
    <property type="project" value="UniProtKB"/>
</dbReference>
<dbReference type="GO" id="GO:0005654">
    <property type="term" value="C:nucleoplasm"/>
    <property type="evidence" value="ECO:0000314"/>
    <property type="project" value="HPA"/>
</dbReference>
<dbReference type="GO" id="GO:0005634">
    <property type="term" value="C:nucleus"/>
    <property type="evidence" value="ECO:0000314"/>
    <property type="project" value="UniProtKB"/>
</dbReference>
<dbReference type="GO" id="GO:0060090">
    <property type="term" value="F:molecular adaptor activity"/>
    <property type="evidence" value="ECO:0000314"/>
    <property type="project" value="UniProt"/>
</dbReference>
<dbReference type="GO" id="GO:0007178">
    <property type="term" value="P:cell surface receptor protein serine/threonine kinase signaling pathway"/>
    <property type="evidence" value="ECO:0000318"/>
    <property type="project" value="GO_Central"/>
</dbReference>
<dbReference type="GO" id="GO:0045087">
    <property type="term" value="P:innate immune response"/>
    <property type="evidence" value="ECO:0000318"/>
    <property type="project" value="GO_Central"/>
</dbReference>
<dbReference type="GO" id="GO:0032981">
    <property type="term" value="P:mitochondrial respiratory chain complex I assembly"/>
    <property type="evidence" value="ECO:0000303"/>
    <property type="project" value="ComplexPortal"/>
</dbReference>
<dbReference type="GO" id="GO:0051341">
    <property type="term" value="P:regulation of oxidoreductase activity"/>
    <property type="evidence" value="ECO:0000314"/>
    <property type="project" value="UniProtKB"/>
</dbReference>
<dbReference type="GO" id="GO:0061635">
    <property type="term" value="P:regulation of protein complex stability"/>
    <property type="evidence" value="ECO:0000314"/>
    <property type="project" value="UniProtKB"/>
</dbReference>
<dbReference type="GO" id="GO:0034142">
    <property type="term" value="P:toll-like receptor 4 signaling pathway"/>
    <property type="evidence" value="ECO:0000314"/>
    <property type="project" value="UniProt"/>
</dbReference>
<dbReference type="InterPro" id="IPR029342">
    <property type="entry name" value="ECIST_C"/>
</dbReference>
<dbReference type="InterPro" id="IPR010418">
    <property type="entry name" value="ECSIT"/>
</dbReference>
<dbReference type="InterPro" id="IPR046448">
    <property type="entry name" value="ECSIT_N"/>
</dbReference>
<dbReference type="PANTHER" id="PTHR13113">
    <property type="entry name" value="ECSIT EVOLUTIONARILY CONSERVED SIGNALING INTERMEDIATE IN TOLL PATHWAYS"/>
    <property type="match status" value="1"/>
</dbReference>
<dbReference type="PANTHER" id="PTHR13113:SF1">
    <property type="entry name" value="EVOLUTIONARILY CONSERVED SIGNALING INTERMEDIATE IN TOLL PATHWAY, MITOCHONDRIAL"/>
    <property type="match status" value="1"/>
</dbReference>
<dbReference type="Pfam" id="PF14784">
    <property type="entry name" value="ECSIT_C"/>
    <property type="match status" value="1"/>
</dbReference>
<dbReference type="Pfam" id="PF06239">
    <property type="entry name" value="ECSIT_N"/>
    <property type="match status" value="1"/>
</dbReference>
<dbReference type="SMART" id="SM01284">
    <property type="entry name" value="ECSIT_Cterm"/>
    <property type="match status" value="1"/>
</dbReference>
<reference key="1">
    <citation type="submission" date="2000-03" db="EMBL/GenBank/DDBJ databases">
        <title>Nucleotide sequence of the human ECSIT cDNA.</title>
        <authorList>
            <person name="Fitzgerald S.N."/>
            <person name="Brady K.J."/>
            <person name="Moynagh P.N."/>
        </authorList>
    </citation>
    <scope>NUCLEOTIDE SEQUENCE [MRNA] (ISOFORM 1)</scope>
    <scope>VARIANT CYS-278</scope>
</reference>
<reference key="2">
    <citation type="journal article" date="2004" name="Nat. Genet.">
        <title>Complete sequencing and characterization of 21,243 full-length human cDNAs.</title>
        <authorList>
            <person name="Ota T."/>
            <person name="Suzuki Y."/>
            <person name="Nishikawa T."/>
            <person name="Otsuki T."/>
            <person name="Sugiyama T."/>
            <person name="Irie R."/>
            <person name="Wakamatsu A."/>
            <person name="Hayashi K."/>
            <person name="Sato H."/>
            <person name="Nagai K."/>
            <person name="Kimura K."/>
            <person name="Makita H."/>
            <person name="Sekine M."/>
            <person name="Obayashi M."/>
            <person name="Nishi T."/>
            <person name="Shibahara T."/>
            <person name="Tanaka T."/>
            <person name="Ishii S."/>
            <person name="Yamamoto J."/>
            <person name="Saito K."/>
            <person name="Kawai Y."/>
            <person name="Isono Y."/>
            <person name="Nakamura Y."/>
            <person name="Nagahari K."/>
            <person name="Murakami K."/>
            <person name="Yasuda T."/>
            <person name="Iwayanagi T."/>
            <person name="Wagatsuma M."/>
            <person name="Shiratori A."/>
            <person name="Sudo H."/>
            <person name="Hosoiri T."/>
            <person name="Kaku Y."/>
            <person name="Kodaira H."/>
            <person name="Kondo H."/>
            <person name="Sugawara M."/>
            <person name="Takahashi M."/>
            <person name="Kanda K."/>
            <person name="Yokoi T."/>
            <person name="Furuya T."/>
            <person name="Kikkawa E."/>
            <person name="Omura Y."/>
            <person name="Abe K."/>
            <person name="Kamihara K."/>
            <person name="Katsuta N."/>
            <person name="Sato K."/>
            <person name="Tanikawa M."/>
            <person name="Yamazaki M."/>
            <person name="Ninomiya K."/>
            <person name="Ishibashi T."/>
            <person name="Yamashita H."/>
            <person name="Murakawa K."/>
            <person name="Fujimori K."/>
            <person name="Tanai H."/>
            <person name="Kimata M."/>
            <person name="Watanabe M."/>
            <person name="Hiraoka S."/>
            <person name="Chiba Y."/>
            <person name="Ishida S."/>
            <person name="Ono Y."/>
            <person name="Takiguchi S."/>
            <person name="Watanabe S."/>
            <person name="Yosida M."/>
            <person name="Hotuta T."/>
            <person name="Kusano J."/>
            <person name="Kanehori K."/>
            <person name="Takahashi-Fujii A."/>
            <person name="Hara H."/>
            <person name="Tanase T.-O."/>
            <person name="Nomura Y."/>
            <person name="Togiya S."/>
            <person name="Komai F."/>
            <person name="Hara R."/>
            <person name="Takeuchi K."/>
            <person name="Arita M."/>
            <person name="Imose N."/>
            <person name="Musashino K."/>
            <person name="Yuuki H."/>
            <person name="Oshima A."/>
            <person name="Sasaki N."/>
            <person name="Aotsuka S."/>
            <person name="Yoshikawa Y."/>
            <person name="Matsunawa H."/>
            <person name="Ichihara T."/>
            <person name="Shiohata N."/>
            <person name="Sano S."/>
            <person name="Moriya S."/>
            <person name="Momiyama H."/>
            <person name="Satoh N."/>
            <person name="Takami S."/>
            <person name="Terashima Y."/>
            <person name="Suzuki O."/>
            <person name="Nakagawa S."/>
            <person name="Senoh A."/>
            <person name="Mizoguchi H."/>
            <person name="Goto Y."/>
            <person name="Shimizu F."/>
            <person name="Wakebe H."/>
            <person name="Hishigaki H."/>
            <person name="Watanabe T."/>
            <person name="Sugiyama A."/>
            <person name="Takemoto M."/>
            <person name="Kawakami B."/>
            <person name="Yamazaki M."/>
            <person name="Watanabe K."/>
            <person name="Kumagai A."/>
            <person name="Itakura S."/>
            <person name="Fukuzumi Y."/>
            <person name="Fujimori Y."/>
            <person name="Komiyama M."/>
            <person name="Tashiro H."/>
            <person name="Tanigami A."/>
            <person name="Fujiwara T."/>
            <person name="Ono T."/>
            <person name="Yamada K."/>
            <person name="Fujii Y."/>
            <person name="Ozaki K."/>
            <person name="Hirao M."/>
            <person name="Ohmori Y."/>
            <person name="Kawabata A."/>
            <person name="Hikiji T."/>
            <person name="Kobatake N."/>
            <person name="Inagaki H."/>
            <person name="Ikema Y."/>
            <person name="Okamoto S."/>
            <person name="Okitani R."/>
            <person name="Kawakami T."/>
            <person name="Noguchi S."/>
            <person name="Itoh T."/>
            <person name="Shigeta K."/>
            <person name="Senba T."/>
            <person name="Matsumura K."/>
            <person name="Nakajima Y."/>
            <person name="Mizuno T."/>
            <person name="Morinaga M."/>
            <person name="Sasaki M."/>
            <person name="Togashi T."/>
            <person name="Oyama M."/>
            <person name="Hata H."/>
            <person name="Watanabe M."/>
            <person name="Komatsu T."/>
            <person name="Mizushima-Sugano J."/>
            <person name="Satoh T."/>
            <person name="Shirai Y."/>
            <person name="Takahashi Y."/>
            <person name="Nakagawa K."/>
            <person name="Okumura K."/>
            <person name="Nagase T."/>
            <person name="Nomura N."/>
            <person name="Kikuchi H."/>
            <person name="Masuho Y."/>
            <person name="Yamashita R."/>
            <person name="Nakai K."/>
            <person name="Yada T."/>
            <person name="Nakamura Y."/>
            <person name="Ohara O."/>
            <person name="Isogai T."/>
            <person name="Sugano S."/>
        </authorList>
    </citation>
    <scope>NUCLEOTIDE SEQUENCE [LARGE SCALE MRNA] (ISOFORM 4)</scope>
</reference>
<reference key="3">
    <citation type="submission" date="2004-06" db="EMBL/GenBank/DDBJ databases">
        <title>Cloning of human full open reading frames in Gateway(TM) system entry vector (pDONR201).</title>
        <authorList>
            <person name="Ebert L."/>
            <person name="Schick M."/>
            <person name="Neubert P."/>
            <person name="Schatten R."/>
            <person name="Henze S."/>
            <person name="Korn B."/>
        </authorList>
    </citation>
    <scope>NUCLEOTIDE SEQUENCE [LARGE SCALE MRNA] (ISOFORM 1)</scope>
</reference>
<reference key="4">
    <citation type="journal article" date="2004" name="Nature">
        <title>The DNA sequence and biology of human chromosome 19.</title>
        <authorList>
            <person name="Grimwood J."/>
            <person name="Gordon L.A."/>
            <person name="Olsen A.S."/>
            <person name="Terry A."/>
            <person name="Schmutz J."/>
            <person name="Lamerdin J.E."/>
            <person name="Hellsten U."/>
            <person name="Goodstein D."/>
            <person name="Couronne O."/>
            <person name="Tran-Gyamfi M."/>
            <person name="Aerts A."/>
            <person name="Altherr M."/>
            <person name="Ashworth L."/>
            <person name="Bajorek E."/>
            <person name="Black S."/>
            <person name="Branscomb E."/>
            <person name="Caenepeel S."/>
            <person name="Carrano A.V."/>
            <person name="Caoile C."/>
            <person name="Chan Y.M."/>
            <person name="Christensen M."/>
            <person name="Cleland C.A."/>
            <person name="Copeland A."/>
            <person name="Dalin E."/>
            <person name="Dehal P."/>
            <person name="Denys M."/>
            <person name="Detter J.C."/>
            <person name="Escobar J."/>
            <person name="Flowers D."/>
            <person name="Fotopulos D."/>
            <person name="Garcia C."/>
            <person name="Georgescu A.M."/>
            <person name="Glavina T."/>
            <person name="Gomez M."/>
            <person name="Gonzales E."/>
            <person name="Groza M."/>
            <person name="Hammon N."/>
            <person name="Hawkins T."/>
            <person name="Haydu L."/>
            <person name="Ho I."/>
            <person name="Huang W."/>
            <person name="Israni S."/>
            <person name="Jett J."/>
            <person name="Kadner K."/>
            <person name="Kimball H."/>
            <person name="Kobayashi A."/>
            <person name="Larionov V."/>
            <person name="Leem S.-H."/>
            <person name="Lopez F."/>
            <person name="Lou Y."/>
            <person name="Lowry S."/>
            <person name="Malfatti S."/>
            <person name="Martinez D."/>
            <person name="McCready P.M."/>
            <person name="Medina C."/>
            <person name="Morgan J."/>
            <person name="Nelson K."/>
            <person name="Nolan M."/>
            <person name="Ovcharenko I."/>
            <person name="Pitluck S."/>
            <person name="Pollard M."/>
            <person name="Popkie A.P."/>
            <person name="Predki P."/>
            <person name="Quan G."/>
            <person name="Ramirez L."/>
            <person name="Rash S."/>
            <person name="Retterer J."/>
            <person name="Rodriguez A."/>
            <person name="Rogers S."/>
            <person name="Salamov A."/>
            <person name="Salazar A."/>
            <person name="She X."/>
            <person name="Smith D."/>
            <person name="Slezak T."/>
            <person name="Solovyev V."/>
            <person name="Thayer N."/>
            <person name="Tice H."/>
            <person name="Tsai M."/>
            <person name="Ustaszewska A."/>
            <person name="Vo N."/>
            <person name="Wagner M."/>
            <person name="Wheeler J."/>
            <person name="Wu K."/>
            <person name="Xie G."/>
            <person name="Yang J."/>
            <person name="Dubchak I."/>
            <person name="Furey T.S."/>
            <person name="DeJong P."/>
            <person name="Dickson M."/>
            <person name="Gordon D."/>
            <person name="Eichler E.E."/>
            <person name="Pennacchio L.A."/>
            <person name="Richardson P."/>
            <person name="Stubbs L."/>
            <person name="Rokhsar D.S."/>
            <person name="Myers R.M."/>
            <person name="Rubin E.M."/>
            <person name="Lucas S.M."/>
        </authorList>
    </citation>
    <scope>NUCLEOTIDE SEQUENCE [LARGE SCALE GENOMIC DNA]</scope>
</reference>
<reference key="5">
    <citation type="journal article" date="2004" name="Genome Res.">
        <title>The status, quality, and expansion of the NIH full-length cDNA project: the Mammalian Gene Collection (MGC).</title>
        <authorList>
            <consortium name="The MGC Project Team"/>
        </authorList>
    </citation>
    <scope>NUCLEOTIDE SEQUENCE [LARGE SCALE MRNA] (ISOFORMS 1 AND 2)</scope>
    <source>
        <tissue>Eye</tissue>
        <tissue>Lung</tissue>
        <tissue>Pancreas</tissue>
    </source>
</reference>
<reference key="6">
    <citation type="journal article" date="2007" name="Genes Dev.">
        <title>Cytosolic signaling protein Ecsit also localizes to mitochondria where it interacts with chaperone NDUFAF1 and functions in complex I assembly.</title>
        <authorList>
            <person name="Vogel R.O."/>
            <person name="Janssen R.J.R.J."/>
            <person name="van den Brand M.A.M."/>
            <person name="Dieteren C.E.J."/>
            <person name="Verkaart S."/>
            <person name="Koopman W.J.H."/>
            <person name="Willems P.H.G.M."/>
            <person name="Pluk W."/>
            <person name="van den Heuvel L.P.W.J."/>
            <person name="Smeitink J.A.M."/>
            <person name="Nijtmans L.G.J."/>
        </authorList>
    </citation>
    <scope>SUBCELLULAR LOCATION</scope>
    <scope>IDENTIFICATION BY MASS SPECTROMETRY</scope>
    <scope>INTERACTION WITH NDUFAF1</scope>
</reference>
<reference key="7">
    <citation type="journal article" date="2010" name="Cell Metab.">
        <title>Acyl-CoA dehydrogenase 9 is required for the biogenesis of oxidative phosphorylation complex I.</title>
        <authorList>
            <person name="Nouws J."/>
            <person name="Nijtmans L."/>
            <person name="Houten S.M."/>
            <person name="van den Brand M."/>
            <person name="Huynen M."/>
            <person name="Venselaar H."/>
            <person name="Hoefs S."/>
            <person name="Gloerich J."/>
            <person name="Kronick J."/>
            <person name="Hutchin T."/>
            <person name="Willems P."/>
            <person name="Rodenburg R."/>
            <person name="Wanders R."/>
            <person name="van den Heuvel L."/>
            <person name="Smeitink J."/>
            <person name="Vogel R.O."/>
        </authorList>
    </citation>
    <scope>INTERACTION WITH ACAD9</scope>
</reference>
<reference key="8">
    <citation type="journal article" date="2011" name="BMC Syst. Biol.">
        <title>Initial characterization of the human central proteome.</title>
        <authorList>
            <person name="Burkard T.R."/>
            <person name="Planyavsky M."/>
            <person name="Kaupe I."/>
            <person name="Breitwieser F.P."/>
            <person name="Buerckstuemmer T."/>
            <person name="Bennett K.L."/>
            <person name="Superti-Furga G."/>
            <person name="Colinge J."/>
        </authorList>
    </citation>
    <scope>IDENTIFICATION BY MASS SPECTROMETRY [LARGE SCALE ANALYSIS]</scope>
</reference>
<reference key="9">
    <citation type="journal article" date="2011" name="Nature">
        <title>TLR signalling augments macrophage bactericidal activity through mitochondrial ROS.</title>
        <authorList>
            <person name="West A.P."/>
            <person name="Brodsky I.E."/>
            <person name="Rahner C."/>
            <person name="Woo D.K."/>
            <person name="Erdjument-Bromage H."/>
            <person name="Tempst P."/>
            <person name="Walsh M.C."/>
            <person name="Choi Y."/>
            <person name="Shadel G.S."/>
            <person name="Ghosh S."/>
        </authorList>
    </citation>
    <scope>FUNCTION</scope>
    <scope>SUBCELLULAR LOCATION</scope>
    <scope>UBIQUITINATION BY TRAF6</scope>
</reference>
<reference key="10">
    <citation type="journal article" date="2012" name="Biochem. Biophys. Res. Commun.">
        <title>TRIM59 interacts with ECSIT and negatively regulates NF-kappaB and IRF-3/7-mediated signal pathways.</title>
        <authorList>
            <person name="Kondo T."/>
            <person name="Watanabe M."/>
            <person name="Hatakeyama S."/>
        </authorList>
    </citation>
    <scope>FUNCTION</scope>
    <scope>INTERACTION WITH TRIM59</scope>
</reference>
<reference key="11">
    <citation type="journal article" date="2015" name="Proteomics">
        <title>N-terminome analysis of the human mitochondrial proteome.</title>
        <authorList>
            <person name="Vaca Jacome A.S."/>
            <person name="Rabilloud T."/>
            <person name="Schaeffer-Reiss C."/>
            <person name="Rompais M."/>
            <person name="Ayoub D."/>
            <person name="Lane L."/>
            <person name="Bairoch A."/>
            <person name="Van Dorsselaer A."/>
            <person name="Carapito C."/>
        </authorList>
    </citation>
    <scope>IDENTIFICATION BY MASS SPECTROMETRY [LARGE SCALE ANALYSIS]</scope>
</reference>
<reference key="12">
    <citation type="journal article" date="2015" name="Mol. Biol. Cell">
        <title>Ubiquitination of ECSIT is crucial for the activation of p65/p50 NF-kappaBs in Toll-like receptor 4 signaling.</title>
        <authorList>
            <person name="Mi Wi S."/>
            <person name="Park J."/>
            <person name="Shim J.H."/>
            <person name="Chun E."/>
            <person name="Lee K.Y."/>
        </authorList>
    </citation>
    <scope>FUNCTION</scope>
    <scope>INTERACTION WITH RELA AND NFKB1</scope>
    <scope>SUBCELLULAR LOCATION</scope>
    <scope>UBIQUITINATION AT LYS-372</scope>
    <scope>MUTAGENESIS OF LYS-372</scope>
</reference>
<reference key="13">
    <citation type="journal article" date="2015" name="J. Innate Immun.">
        <title>ECSIT bridges RIG-I-like receptors to VISA in signaling events of innate antiviral responses.</title>
        <authorList>
            <person name="Lei C.Q."/>
            <person name="Zhang Y."/>
            <person name="Li M."/>
            <person name="Jiang L.Q."/>
            <person name="Zhong B."/>
            <person name="Kim Y.H."/>
            <person name="Shu H.B."/>
        </authorList>
    </citation>
    <scope>FUNCTION</scope>
    <scope>SUBCELLULAR LOCATION</scope>
    <scope>INTERACTION WITH RIGI; IFIH1 AND MAVS</scope>
</reference>
<reference key="14">
    <citation type="journal article" date="2019" name="Immune Netw.">
        <title>p62 Negatively Regulates TLR4 Signaling via Functional Regulation of the TRAF6-ECSIT Complex.</title>
        <authorList>
            <person name="Kim M.J."/>
            <person name="Min Y."/>
            <person name="Kwon J."/>
            <person name="Son J."/>
            <person name="Im J.S."/>
            <person name="Shin J."/>
            <person name="Lee K.Y."/>
        </authorList>
    </citation>
    <scope>FUNCTION</scope>
    <scope>INTERACTION WITH SQSTM1</scope>
</reference>
<reference key="15">
    <citation type="journal article" date="2019" name="Front. Immunol.">
        <title>CRBN Is a Negative Regulator of Bactericidal Activity and Autophagy Activation Through Inhibiting the Ubiquitination of ECSIT and BECN1.</title>
        <authorList>
            <person name="Kim M.J."/>
            <person name="Min Y."/>
            <person name="Shim J.H."/>
            <person name="Chun E."/>
            <person name="Lee K.Y."/>
        </authorList>
    </citation>
    <scope>FUNCTION</scope>
    <scope>INTERACTION WITH CRBN</scope>
</reference>
<reference key="16">
    <citation type="journal article" date="2020" name="Cell Rep.">
        <title>Dissecting the Roles of Mitochondrial Complex I Intermediate Assembly Complex Factors in the Biogenesis of Complex I.</title>
        <authorList>
            <person name="Formosa L.E."/>
            <person name="Muellner-Wong L."/>
            <person name="Reljic B."/>
            <person name="Sharpe A.J."/>
            <person name="Jackson T.D."/>
            <person name="Beilharz T.H."/>
            <person name="Stojanovski D."/>
            <person name="Lazarou M."/>
            <person name="Stroud D.A."/>
            <person name="Ryan M.T."/>
        </authorList>
    </citation>
    <scope>IDENTIFICATION IN THE MCIA COMPLEX</scope>
    <scope>FUNCTION</scope>
</reference>
<reference key="17">
    <citation type="journal article" date="2021" name="Proc. Natl. Acad. Sci. U.S.A.">
        <title>TMEM70 and TMEM242 help to assemble the rotor ring of human ATP synthase and interact with assembly factors for complex I.</title>
        <authorList>
            <person name="Carroll J."/>
            <person name="He J."/>
            <person name="Ding S."/>
            <person name="Fearnley I.M."/>
            <person name="Walker J.E."/>
        </authorList>
    </citation>
    <scope>INTERACTION WITH TMEM70 AND TMEM242</scope>
</reference>
<feature type="transit peptide" description="Mitochondrion" evidence="3">
    <location>
        <begin position="1"/>
        <end position="48"/>
    </location>
</feature>
<feature type="chain" id="PRO_0000291985" description="Evolutionarily conserved signaling intermediate in Toll pathway, mitochondrial">
    <location>
        <begin position="49"/>
        <end position="431"/>
    </location>
</feature>
<feature type="region of interest" description="Disordered" evidence="4">
    <location>
        <begin position="400"/>
        <end position="431"/>
    </location>
</feature>
<feature type="cross-link" description="Glycyl lysine isopeptide (Lys-Gly) (interchain with G-Cter in ubiquitin)" evidence="9">
    <location>
        <position position="372"/>
    </location>
</feature>
<feature type="splice variant" id="VSP_046689" description="In isoform 3." evidence="17">
    <location>
        <begin position="35"/>
        <end position="248"/>
    </location>
</feature>
<feature type="splice variant" id="VSP_055626" description="In isoform 4." evidence="15">
    <original>GIQSPDQQAALARHNPARPVFVEGPFSLWLR</original>
    <variation>ELTCCPRRRGKWKRRRRSGTSTTRCSWTWSM</variation>
    <location>
        <begin position="266"/>
        <end position="296"/>
    </location>
</feature>
<feature type="splice variant" id="VSP_026345" description="In isoform 2." evidence="16">
    <original>IQSPDQQAALARHNPARPVFVEGPFSLWLR</original>
    <variation>SGRDAGGVEPLLPDAAGPGVCEEWLGQLRV</variation>
    <location>
        <begin position="267"/>
        <end position="296"/>
    </location>
</feature>
<feature type="splice variant" id="VSP_026346" description="In isoform 2 and isoform 4." evidence="15 16">
    <location>
        <begin position="297"/>
        <end position="431"/>
    </location>
</feature>
<feature type="sequence variant" id="VAR_032907" description="In dbSNP:rs34803265." evidence="14">
    <original>R</original>
    <variation>C</variation>
    <location>
        <position position="278"/>
    </location>
</feature>
<feature type="sequence variant" id="VAR_032908" description="In dbSNP:rs2302971.">
    <original>G</original>
    <variation>R</variation>
    <location>
        <position position="406"/>
    </location>
</feature>
<feature type="mutagenesis site" description="Complete loss of interaction with RELA and NFKB1 together with loss of NF-kappa-B-dependent gene expression." evidence="9">
    <original>K</original>
    <variation>A</variation>
    <location>
        <position position="372"/>
    </location>
</feature>
<feature type="sequence conflict" description="In Ref. 2; AK314905." evidence="17" ref="2">
    <original>V</original>
    <variation>A</variation>
    <location>
        <position position="242"/>
    </location>
</feature>
<protein>
    <recommendedName>
        <fullName evidence="17">Evolutionarily conserved signaling intermediate in Toll pathway, mitochondrial</fullName>
    </recommendedName>
    <alternativeName>
        <fullName>Protein SITPEC</fullName>
    </alternativeName>
</protein>
<sequence length="431" mass="49148">MSWVQATLLARGLCRAWGGTCGAALTGTSISQVPRRLPRGLHCSAAAHSSEQSLVPSPPEPRQRPTKALVPFEDLFGQAPGGERDKASFLQTVQKFAEHSVRKRGHIDFIYLALRKMREYGVERDLAVYNQLLNIFPKEVFRPRNIIQRIFVHYPRQQECGIAVLEQMENHGVMPNKETEFLLIQIFGRKSYPMLKLVRLKLWFPRFMNVNPFPVPRDLPQDPVELAMFGLRHMEPDLSARVTIYQVPLPKDSTGAADPPQPHIVGIQSPDQQAALARHNPARPVFVEGPFSLWLRNKCVYYHILRADLLPPEEREVEETPEEWNLYYPMQLDLEYVRSGWDNYEFDINEVEEGPVFAMCMAGAHDQATMAKWIQGLQETNPTLAQIPVVFRLAGSTRELQTSSAGLEEPPLPEDHQEEDDNLQRQQQGQS</sequence>
<organism>
    <name type="scientific">Homo sapiens</name>
    <name type="common">Human</name>
    <dbReference type="NCBI Taxonomy" id="9606"/>
    <lineage>
        <taxon>Eukaryota</taxon>
        <taxon>Metazoa</taxon>
        <taxon>Chordata</taxon>
        <taxon>Craniata</taxon>
        <taxon>Vertebrata</taxon>
        <taxon>Euteleostomi</taxon>
        <taxon>Mammalia</taxon>
        <taxon>Eutheria</taxon>
        <taxon>Euarchontoglires</taxon>
        <taxon>Primates</taxon>
        <taxon>Haplorrhini</taxon>
        <taxon>Catarrhini</taxon>
        <taxon>Hominidae</taxon>
        <taxon>Homo</taxon>
    </lineage>
</organism>
<proteinExistence type="evidence at protein level"/>
<gene>
    <name evidence="18" type="primary">ECSIT</name>
</gene>
<evidence type="ECO:0000250" key="1"/>
<evidence type="ECO:0000250" key="2">
    <source>
        <dbReference type="UniProtKB" id="Q9QZH6"/>
    </source>
</evidence>
<evidence type="ECO:0000255" key="3"/>
<evidence type="ECO:0000256" key="4">
    <source>
        <dbReference type="SAM" id="MobiDB-lite"/>
    </source>
</evidence>
<evidence type="ECO:0000269" key="5">
    <source>
    </source>
</evidence>
<evidence type="ECO:0000269" key="6">
    <source>
    </source>
</evidence>
<evidence type="ECO:0000269" key="7">
    <source>
    </source>
</evidence>
<evidence type="ECO:0000269" key="8">
    <source>
    </source>
</evidence>
<evidence type="ECO:0000269" key="9">
    <source>
    </source>
</evidence>
<evidence type="ECO:0000269" key="10">
    <source>
    </source>
</evidence>
<evidence type="ECO:0000269" key="11">
    <source>
    </source>
</evidence>
<evidence type="ECO:0000269" key="12">
    <source>
    </source>
</evidence>
<evidence type="ECO:0000269" key="13">
    <source>
    </source>
</evidence>
<evidence type="ECO:0000269" key="14">
    <source ref="1"/>
</evidence>
<evidence type="ECO:0000303" key="15">
    <source>
    </source>
</evidence>
<evidence type="ECO:0000303" key="16">
    <source>
    </source>
</evidence>
<evidence type="ECO:0000305" key="17"/>
<evidence type="ECO:0000312" key="18">
    <source>
        <dbReference type="HGNC" id="HGNC:29548"/>
    </source>
</evidence>
<accession>Q9BQ95</accession>
<accession>E9PAN9</accession>
<accession>K7EMM0</accession>
<accession>Q96HQ7</accession>
<accession>Q9NYI1</accession>
<name>ECSIT_HUMAN</name>
<keyword id="KW-0025">Alternative splicing</keyword>
<keyword id="KW-0963">Cytoplasm</keyword>
<keyword id="KW-0391">Immunity</keyword>
<keyword id="KW-0399">Innate immunity</keyword>
<keyword id="KW-1017">Isopeptide bond</keyword>
<keyword id="KW-0496">Mitochondrion</keyword>
<keyword id="KW-0539">Nucleus</keyword>
<keyword id="KW-1267">Proteomics identification</keyword>
<keyword id="KW-1185">Reference proteome</keyword>
<keyword id="KW-0809">Transit peptide</keyword>
<keyword id="KW-0832">Ubl conjugation</keyword>
<comment type="function">
    <text evidence="1 8 9 10">Adapter protein that plays a role in different signaling pathways including TLRs and IL-1 pathways or innate antiviral induction signaling. Plays a role in the activation of NF-kappa-B by forming a signal complex with TRAF6 and TAK1/MAP3K7 to activate TAK1/MAP3K7 leading to activation of IKKs (PubMed:25355951, PubMed:31281713). Once ubiquitinated, interacts with the dissociated RELA and NFKB1 proteins and translocates to the nucleus where it induces NF-kappa-B-dependent gene expression (PubMed:25355951). Plays a role in innate antiviral immune response by bridging the pattern recognition receptors RIGI and MDA5/IFIT1 to the MAVS complex at the mitochondrion (PubMed:25228397). Promotes proteolytic activation of MAP3K1. Involved in the BMP signaling pathway. Required for normal embryonic development (By similarity).</text>
</comment>
<comment type="function">
    <text evidence="12">As part of the MCIA complex, involved in the assembly of the mitochondrial complex I.</text>
</comment>
<comment type="subunit">
    <text evidence="2 5 6 7 8 9 10 11 12 13">Interacts with MAP3K1, SMAD4 and TRAF6. Interacts with SMAD1 only after BMP4-treatment (By similarity). Part of the mitochondrial complex I assembly/MCIA complex that comprises at least the core subunits TMEM126B, NDUFAF1, ECSIT and ACAD9 and complement subunits such as COA1 and TMEM186 (PubMed:32320651). Interacts with NDUFAF1 (PubMed:17344420). Interacts with ACAD9 (PubMed:20816094). Interacts with TRIM59 (PubMed:22588174). Interacts with TMEM70 and TMEM242 (PubMed:33753518). Interacts (when ubiquitinated) with NF-kappa-B subunits RELA and NFKB1 (PubMed:25355951). Interacts with RIGI, IFIT1 and MAVS; these interactions promote RLR-mediated type I IFN induction (PubMed:25228397). Interacts with SQSTM1; this interaction inhibits TLR4 signaling via functional regulation of the TRAF6-ECSIT complex (PubMed:31281713). Interacts with cereblon/CRBN; this interaction inhibits the ubiquitination of ECSIT (PubMed:31620128).</text>
</comment>
<comment type="interaction">
    <interactant intactId="EBI-712452">
        <id>Q9BQ95</id>
    </interactant>
    <interactant intactId="EBI-8643161">
        <id>Q9NX04</id>
        <label>AIRIM</label>
    </interactant>
    <organismsDiffer>false</organismsDiffer>
    <experiments>3</experiments>
</comment>
<comment type="interaction">
    <interactant intactId="EBI-712452">
        <id>Q9BQ95</id>
    </interactant>
    <interactant intactId="EBI-1222467">
        <id>P02649</id>
        <label>APOE</label>
    </interactant>
    <organismsDiffer>false</organismsDiffer>
    <experiments>4</experiments>
</comment>
<comment type="interaction">
    <interactant intactId="EBI-712452">
        <id>Q9BQ95</id>
    </interactant>
    <interactant intactId="EBI-10229433">
        <id>Q13515</id>
        <label>BFSP2</label>
    </interactant>
    <organismsDiffer>false</organismsDiffer>
    <experiments>3</experiments>
</comment>
<comment type="interaction">
    <interactant intactId="EBI-712452">
        <id>Q9BQ95</id>
    </interactant>
    <interactant intactId="EBI-11962928">
        <id>Q9UI47-2</id>
        <label>CTNNA3</label>
    </interactant>
    <organismsDiffer>false</organismsDiffer>
    <experiments>3</experiments>
</comment>
<comment type="interaction">
    <interactant intactId="EBI-712452">
        <id>Q9BQ95</id>
    </interactant>
    <interactant intactId="EBI-740376">
        <id>Q86UW9</id>
        <label>DTX2</label>
    </interactant>
    <organismsDiffer>false</organismsDiffer>
    <experiments>3</experiments>
</comment>
<comment type="interaction">
    <interactant intactId="EBI-712452">
        <id>Q9BQ95</id>
    </interactant>
    <interactant intactId="EBI-725361">
        <id>Q9Y285</id>
        <label>FARSA</label>
    </interactant>
    <organismsDiffer>false</organismsDiffer>
    <experiments>2</experiments>
</comment>
<comment type="interaction">
    <interactant intactId="EBI-712452">
        <id>Q9BQ95</id>
    </interactant>
    <interactant intactId="EBI-744104">
        <id>P55040</id>
        <label>GEM</label>
    </interactant>
    <organismsDiffer>false</organismsDiffer>
    <experiments>3</experiments>
</comment>
<comment type="interaction">
    <interactant intactId="EBI-712452">
        <id>Q9BQ95</id>
    </interactant>
    <interactant intactId="EBI-1057615">
        <id>O15479</id>
        <label>MAGEB2</label>
    </interactant>
    <organismsDiffer>false</organismsDiffer>
    <experiments>3</experiments>
</comment>
<comment type="interaction">
    <interactant intactId="EBI-712452">
        <id>Q9BQ95</id>
    </interactant>
    <interactant intactId="EBI-2340269">
        <id>Q13064</id>
        <label>MKRN3</label>
    </interactant>
    <organismsDiffer>false</organismsDiffer>
    <experiments>3</experiments>
</comment>
<comment type="interaction">
    <interactant intactId="EBI-712452">
        <id>Q9BQ95</id>
    </interactant>
    <interactant intactId="EBI-398874">
        <id>Q9UBU9</id>
        <label>NXF1</label>
    </interactant>
    <organismsDiffer>false</organismsDiffer>
    <experiments>3</experiments>
</comment>
<comment type="interaction">
    <interactant intactId="EBI-712452">
        <id>Q9BQ95</id>
    </interactant>
    <interactant intactId="EBI-297277">
        <id>P49768</id>
        <label>PSEN1</label>
    </interactant>
    <organismsDiffer>false</organismsDiffer>
    <experiments>4</experiments>
</comment>
<comment type="interaction">
    <interactant intactId="EBI-712452">
        <id>Q9BQ95</id>
    </interactant>
    <interactant intactId="EBI-2010251">
        <id>P49810</id>
        <label>PSEN2</label>
    </interactant>
    <organismsDiffer>false</organismsDiffer>
    <experiments>4</experiments>
</comment>
<comment type="interaction">
    <interactant intactId="EBI-712452">
        <id>Q9BQ95</id>
    </interactant>
    <interactant intactId="EBI-1056629">
        <id>A2RTX5</id>
        <label>TARS3</label>
    </interactant>
    <organismsDiffer>false</organismsDiffer>
    <experiments>3</experiments>
</comment>
<comment type="interaction">
    <interactant intactId="EBI-712452">
        <id>Q9BQ95</id>
    </interactant>
    <interactant intactId="EBI-3918381">
        <id>Q96PN8</id>
        <label>TSSK3</label>
    </interactant>
    <organismsDiffer>false</organismsDiffer>
    <experiments>3</experiments>
</comment>
<comment type="subcellular location">
    <subcellularLocation>
        <location evidence="5 9">Cytoplasm</location>
    </subcellularLocation>
    <subcellularLocation>
        <location evidence="5 9">Nucleus</location>
    </subcellularLocation>
    <subcellularLocation>
        <location evidence="5 8">Mitochondrion</location>
    </subcellularLocation>
</comment>
<comment type="alternative products">
    <event type="alternative splicing"/>
    <isoform>
        <id>Q9BQ95-1</id>
        <name>1</name>
        <sequence type="displayed"/>
    </isoform>
    <isoform>
        <id>Q9BQ95-2</id>
        <name>2</name>
        <sequence type="described" ref="VSP_026345 VSP_026346"/>
    </isoform>
    <isoform>
        <id>Q9BQ95-3</id>
        <name>3</name>
        <sequence type="described" ref="VSP_046689"/>
    </isoform>
    <isoform>
        <id>Q9BQ95-4</id>
        <name>4</name>
        <sequence type="described" ref="VSP_055626 VSP_026346"/>
    </isoform>
</comment>
<comment type="PTM">
    <text evidence="9">Ubiquitinated on Lys-372; leading to translocation in the nucleus together with RELA and NFKB1 and expression of NF-kappa-B-dependent genes.</text>
</comment>
<comment type="similarity">
    <text evidence="17">Belongs to the ECSIT family.</text>
</comment>